<sequence length="267" mass="31532">MRILVEIAYQGNQFLGFQIQQQGRTVQQQFEKILKRMHKHHVRIHPSSRTDRGVHAYQQFFHFDTELNIDNKQWQYAMNRALPDDIYVKNVRNVDEYFHCRYDCVGKRYRYKVYQGNHRNPFKSGTETFVNETLDYDKMNKAAQEFIGTHDFTGFCSQKTEVESKVRTLYQSEIVATKEGFDYVVTGSGFLYNMVRVLVAFLIEVGKGKREPNDVPKLLEDKNRNNVPLTAPPDGLYLEKIYLSPEELIQEYGKDIKIHYKKSLEKH</sequence>
<organism>
    <name type="scientific">Staphylococcus epidermidis (strain ATCC 12228 / FDA PCI 1200)</name>
    <dbReference type="NCBI Taxonomy" id="176280"/>
    <lineage>
        <taxon>Bacteria</taxon>
        <taxon>Bacillati</taxon>
        <taxon>Bacillota</taxon>
        <taxon>Bacilli</taxon>
        <taxon>Bacillales</taxon>
        <taxon>Staphylococcaceae</taxon>
        <taxon>Staphylococcus</taxon>
    </lineage>
</organism>
<evidence type="ECO:0000255" key="1">
    <source>
        <dbReference type="HAMAP-Rule" id="MF_00171"/>
    </source>
</evidence>
<accession>Q8CML6</accession>
<comment type="function">
    <text evidence="1">Formation of pseudouridine at positions 38, 39 and 40 in the anticodon stem and loop of transfer RNAs.</text>
</comment>
<comment type="catalytic activity">
    <reaction evidence="1">
        <text>uridine(38/39/40) in tRNA = pseudouridine(38/39/40) in tRNA</text>
        <dbReference type="Rhea" id="RHEA:22376"/>
        <dbReference type="Rhea" id="RHEA-COMP:10085"/>
        <dbReference type="Rhea" id="RHEA-COMP:10087"/>
        <dbReference type="ChEBI" id="CHEBI:65314"/>
        <dbReference type="ChEBI" id="CHEBI:65315"/>
        <dbReference type="EC" id="5.4.99.12"/>
    </reaction>
</comment>
<comment type="subunit">
    <text evidence="1">Homodimer.</text>
</comment>
<comment type="similarity">
    <text evidence="1">Belongs to the tRNA pseudouridine synthase TruA family.</text>
</comment>
<dbReference type="EC" id="5.4.99.12" evidence="1"/>
<dbReference type="EMBL" id="AE015929">
    <property type="protein sequence ID" value="AAO05433.1"/>
    <property type="molecule type" value="Genomic_DNA"/>
</dbReference>
<dbReference type="RefSeq" id="NP_765347.1">
    <property type="nucleotide sequence ID" value="NC_004461.1"/>
</dbReference>
<dbReference type="RefSeq" id="WP_002467764.1">
    <property type="nucleotide sequence ID" value="NZ_WBME01000007.1"/>
</dbReference>
<dbReference type="SMR" id="Q8CML6"/>
<dbReference type="KEGG" id="sep:SE_1792"/>
<dbReference type="PATRIC" id="fig|176280.10.peg.1749"/>
<dbReference type="eggNOG" id="COG0101">
    <property type="taxonomic scope" value="Bacteria"/>
</dbReference>
<dbReference type="HOGENOM" id="CLU_014673_0_1_9"/>
<dbReference type="OrthoDB" id="9811823at2"/>
<dbReference type="Proteomes" id="UP000001411">
    <property type="component" value="Chromosome"/>
</dbReference>
<dbReference type="GO" id="GO:0003723">
    <property type="term" value="F:RNA binding"/>
    <property type="evidence" value="ECO:0007669"/>
    <property type="project" value="InterPro"/>
</dbReference>
<dbReference type="GO" id="GO:0160147">
    <property type="term" value="F:tRNA pseudouridine(38-40) synthase activity"/>
    <property type="evidence" value="ECO:0007669"/>
    <property type="project" value="UniProtKB-EC"/>
</dbReference>
<dbReference type="GO" id="GO:0031119">
    <property type="term" value="P:tRNA pseudouridine synthesis"/>
    <property type="evidence" value="ECO:0007669"/>
    <property type="project" value="UniProtKB-UniRule"/>
</dbReference>
<dbReference type="CDD" id="cd02570">
    <property type="entry name" value="PseudoU_synth_EcTruA"/>
    <property type="match status" value="1"/>
</dbReference>
<dbReference type="FunFam" id="3.30.70.580:FF:000001">
    <property type="entry name" value="tRNA pseudouridine synthase A"/>
    <property type="match status" value="1"/>
</dbReference>
<dbReference type="Gene3D" id="3.30.70.660">
    <property type="entry name" value="Pseudouridine synthase I, catalytic domain, C-terminal subdomain"/>
    <property type="match status" value="1"/>
</dbReference>
<dbReference type="Gene3D" id="3.30.70.580">
    <property type="entry name" value="Pseudouridine synthase I, catalytic domain, N-terminal subdomain"/>
    <property type="match status" value="1"/>
</dbReference>
<dbReference type="HAMAP" id="MF_00171">
    <property type="entry name" value="TruA"/>
    <property type="match status" value="1"/>
</dbReference>
<dbReference type="InterPro" id="IPR020103">
    <property type="entry name" value="PsdUridine_synth_cat_dom_sf"/>
</dbReference>
<dbReference type="InterPro" id="IPR001406">
    <property type="entry name" value="PsdUridine_synth_TruA"/>
</dbReference>
<dbReference type="InterPro" id="IPR020097">
    <property type="entry name" value="PsdUridine_synth_TruA_a/b_dom"/>
</dbReference>
<dbReference type="InterPro" id="IPR020095">
    <property type="entry name" value="PsdUridine_synth_TruA_C"/>
</dbReference>
<dbReference type="InterPro" id="IPR020094">
    <property type="entry name" value="TruA/RsuA/RluB/E/F_N"/>
</dbReference>
<dbReference type="NCBIfam" id="TIGR00071">
    <property type="entry name" value="hisT_truA"/>
    <property type="match status" value="1"/>
</dbReference>
<dbReference type="PANTHER" id="PTHR11142">
    <property type="entry name" value="PSEUDOURIDYLATE SYNTHASE"/>
    <property type="match status" value="1"/>
</dbReference>
<dbReference type="PANTHER" id="PTHR11142:SF0">
    <property type="entry name" value="TRNA PSEUDOURIDINE SYNTHASE-LIKE 1"/>
    <property type="match status" value="1"/>
</dbReference>
<dbReference type="Pfam" id="PF01416">
    <property type="entry name" value="PseudoU_synth_1"/>
    <property type="match status" value="2"/>
</dbReference>
<dbReference type="PIRSF" id="PIRSF001430">
    <property type="entry name" value="tRNA_psdUrid_synth"/>
    <property type="match status" value="1"/>
</dbReference>
<dbReference type="SUPFAM" id="SSF55120">
    <property type="entry name" value="Pseudouridine synthase"/>
    <property type="match status" value="1"/>
</dbReference>
<gene>
    <name evidence="1" type="primary">truA</name>
    <name type="ordered locus">SE_1792</name>
</gene>
<reference key="1">
    <citation type="journal article" date="2003" name="Mol. Microbiol.">
        <title>Genome-based analysis of virulence genes in a non-biofilm-forming Staphylococcus epidermidis strain (ATCC 12228).</title>
        <authorList>
            <person name="Zhang Y.-Q."/>
            <person name="Ren S.-X."/>
            <person name="Li H.-L."/>
            <person name="Wang Y.-X."/>
            <person name="Fu G."/>
            <person name="Yang J."/>
            <person name="Qin Z.-Q."/>
            <person name="Miao Y.-G."/>
            <person name="Wang W.-Y."/>
            <person name="Chen R.-S."/>
            <person name="Shen Y."/>
            <person name="Chen Z."/>
            <person name="Yuan Z.-H."/>
            <person name="Zhao G.-P."/>
            <person name="Qu D."/>
            <person name="Danchin A."/>
            <person name="Wen Y.-M."/>
        </authorList>
    </citation>
    <scope>NUCLEOTIDE SEQUENCE [LARGE SCALE GENOMIC DNA]</scope>
    <source>
        <strain>ATCC 12228 / FDA PCI 1200</strain>
    </source>
</reference>
<proteinExistence type="inferred from homology"/>
<keyword id="KW-0413">Isomerase</keyword>
<keyword id="KW-0819">tRNA processing</keyword>
<name>TRUA_STAES</name>
<feature type="chain" id="PRO_0000057455" description="tRNA pseudouridine synthase A">
    <location>
        <begin position="1"/>
        <end position="267"/>
    </location>
</feature>
<feature type="active site" description="Nucleophile" evidence="1">
    <location>
        <position position="51"/>
    </location>
</feature>
<feature type="binding site" evidence="1">
    <location>
        <position position="109"/>
    </location>
    <ligand>
        <name>substrate</name>
    </ligand>
</feature>
<protein>
    <recommendedName>
        <fullName evidence="1">tRNA pseudouridine synthase A</fullName>
        <ecNumber evidence="1">5.4.99.12</ecNumber>
    </recommendedName>
    <alternativeName>
        <fullName evidence="1">tRNA pseudouridine(38-40) synthase</fullName>
    </alternativeName>
    <alternativeName>
        <fullName evidence="1">tRNA pseudouridylate synthase I</fullName>
    </alternativeName>
    <alternativeName>
        <fullName evidence="1">tRNA-uridine isomerase I</fullName>
    </alternativeName>
</protein>